<feature type="chain" id="PRO_0000305540" description="Pantothenate synthetase">
    <location>
        <begin position="1"/>
        <end position="278"/>
    </location>
</feature>
<feature type="active site" description="Proton donor" evidence="1">
    <location>
        <position position="37"/>
    </location>
</feature>
<feature type="binding site" evidence="1">
    <location>
        <begin position="30"/>
        <end position="37"/>
    </location>
    <ligand>
        <name>ATP</name>
        <dbReference type="ChEBI" id="CHEBI:30616"/>
    </ligand>
</feature>
<feature type="binding site" evidence="1">
    <location>
        <position position="61"/>
    </location>
    <ligand>
        <name>(R)-pantoate</name>
        <dbReference type="ChEBI" id="CHEBI:15980"/>
    </ligand>
</feature>
<feature type="binding site" evidence="1">
    <location>
        <position position="61"/>
    </location>
    <ligand>
        <name>beta-alanine</name>
        <dbReference type="ChEBI" id="CHEBI:57966"/>
    </ligand>
</feature>
<feature type="binding site" evidence="1">
    <location>
        <begin position="146"/>
        <end position="149"/>
    </location>
    <ligand>
        <name>ATP</name>
        <dbReference type="ChEBI" id="CHEBI:30616"/>
    </ligand>
</feature>
<feature type="binding site" evidence="1">
    <location>
        <position position="152"/>
    </location>
    <ligand>
        <name>(R)-pantoate</name>
        <dbReference type="ChEBI" id="CHEBI:15980"/>
    </ligand>
</feature>
<feature type="binding site" evidence="1">
    <location>
        <position position="175"/>
    </location>
    <ligand>
        <name>ATP</name>
        <dbReference type="ChEBI" id="CHEBI:30616"/>
    </ligand>
</feature>
<feature type="binding site" evidence="1">
    <location>
        <begin position="183"/>
        <end position="186"/>
    </location>
    <ligand>
        <name>ATP</name>
        <dbReference type="ChEBI" id="CHEBI:30616"/>
    </ligand>
</feature>
<name>PANC_RUTMC</name>
<evidence type="ECO:0000255" key="1">
    <source>
        <dbReference type="HAMAP-Rule" id="MF_00158"/>
    </source>
</evidence>
<gene>
    <name evidence="1" type="primary">panC</name>
    <name type="ordered locus">Rmag_0416</name>
</gene>
<reference key="1">
    <citation type="journal article" date="2007" name="Science">
        <title>The Calyptogena magnifica chemoautotrophic symbiont genome.</title>
        <authorList>
            <person name="Newton I.L.G."/>
            <person name="Woyke T."/>
            <person name="Auchtung T.A."/>
            <person name="Dilly G.F."/>
            <person name="Dutton R.J."/>
            <person name="Fisher M.C."/>
            <person name="Fontanez K.M."/>
            <person name="Lau E."/>
            <person name="Stewart F.J."/>
            <person name="Richardson P.M."/>
            <person name="Barry K.W."/>
            <person name="Saunders E."/>
            <person name="Detter J.C."/>
            <person name="Wu D."/>
            <person name="Eisen J.A."/>
            <person name="Cavanaugh C.M."/>
        </authorList>
    </citation>
    <scope>NUCLEOTIDE SEQUENCE [LARGE SCALE GENOMIC DNA]</scope>
</reference>
<dbReference type="EC" id="6.3.2.1" evidence="1"/>
<dbReference type="EMBL" id="CP000488">
    <property type="protein sequence ID" value="ABL02178.1"/>
    <property type="molecule type" value="Genomic_DNA"/>
</dbReference>
<dbReference type="RefSeq" id="WP_011737803.1">
    <property type="nucleotide sequence ID" value="NC_008610.1"/>
</dbReference>
<dbReference type="SMR" id="A1AW71"/>
<dbReference type="STRING" id="413404.Rmag_0416"/>
<dbReference type="KEGG" id="rma:Rmag_0416"/>
<dbReference type="eggNOG" id="COG0414">
    <property type="taxonomic scope" value="Bacteria"/>
</dbReference>
<dbReference type="HOGENOM" id="CLU_047148_0_0_6"/>
<dbReference type="OrthoDB" id="9773087at2"/>
<dbReference type="UniPathway" id="UPA00028">
    <property type="reaction ID" value="UER00005"/>
</dbReference>
<dbReference type="Proteomes" id="UP000002587">
    <property type="component" value="Chromosome"/>
</dbReference>
<dbReference type="GO" id="GO:0005829">
    <property type="term" value="C:cytosol"/>
    <property type="evidence" value="ECO:0007669"/>
    <property type="project" value="TreeGrafter"/>
</dbReference>
<dbReference type="GO" id="GO:0005524">
    <property type="term" value="F:ATP binding"/>
    <property type="evidence" value="ECO:0007669"/>
    <property type="project" value="UniProtKB-KW"/>
</dbReference>
<dbReference type="GO" id="GO:0004592">
    <property type="term" value="F:pantoate-beta-alanine ligase activity"/>
    <property type="evidence" value="ECO:0007669"/>
    <property type="project" value="UniProtKB-UniRule"/>
</dbReference>
<dbReference type="GO" id="GO:0015940">
    <property type="term" value="P:pantothenate biosynthetic process"/>
    <property type="evidence" value="ECO:0007669"/>
    <property type="project" value="UniProtKB-UniRule"/>
</dbReference>
<dbReference type="CDD" id="cd00560">
    <property type="entry name" value="PanC"/>
    <property type="match status" value="1"/>
</dbReference>
<dbReference type="Gene3D" id="3.40.50.620">
    <property type="entry name" value="HUPs"/>
    <property type="match status" value="1"/>
</dbReference>
<dbReference type="Gene3D" id="3.30.1300.10">
    <property type="entry name" value="Pantoate-beta-alanine ligase, C-terminal domain"/>
    <property type="match status" value="1"/>
</dbReference>
<dbReference type="HAMAP" id="MF_00158">
    <property type="entry name" value="PanC"/>
    <property type="match status" value="1"/>
</dbReference>
<dbReference type="InterPro" id="IPR004821">
    <property type="entry name" value="Cyt_trans-like"/>
</dbReference>
<dbReference type="InterPro" id="IPR003721">
    <property type="entry name" value="Pantoate_ligase"/>
</dbReference>
<dbReference type="InterPro" id="IPR042176">
    <property type="entry name" value="Pantoate_ligase_C"/>
</dbReference>
<dbReference type="InterPro" id="IPR014729">
    <property type="entry name" value="Rossmann-like_a/b/a_fold"/>
</dbReference>
<dbReference type="NCBIfam" id="TIGR00125">
    <property type="entry name" value="cyt_tran_rel"/>
    <property type="match status" value="1"/>
</dbReference>
<dbReference type="NCBIfam" id="TIGR00018">
    <property type="entry name" value="panC"/>
    <property type="match status" value="1"/>
</dbReference>
<dbReference type="PANTHER" id="PTHR21299">
    <property type="entry name" value="CYTIDYLATE KINASE/PANTOATE-BETA-ALANINE LIGASE"/>
    <property type="match status" value="1"/>
</dbReference>
<dbReference type="PANTHER" id="PTHR21299:SF1">
    <property type="entry name" value="PANTOATE--BETA-ALANINE LIGASE"/>
    <property type="match status" value="1"/>
</dbReference>
<dbReference type="Pfam" id="PF02569">
    <property type="entry name" value="Pantoate_ligase"/>
    <property type="match status" value="1"/>
</dbReference>
<dbReference type="SUPFAM" id="SSF52374">
    <property type="entry name" value="Nucleotidylyl transferase"/>
    <property type="match status" value="1"/>
</dbReference>
<organism>
    <name type="scientific">Ruthia magnifica subsp. Calyptogena magnifica</name>
    <dbReference type="NCBI Taxonomy" id="413404"/>
    <lineage>
        <taxon>Bacteria</taxon>
        <taxon>Pseudomonadati</taxon>
        <taxon>Pseudomonadota</taxon>
        <taxon>Gammaproteobacteria</taxon>
        <taxon>Candidatus Pseudothioglobaceae</taxon>
        <taxon>Candidatus Ruthturnera</taxon>
    </lineage>
</organism>
<protein>
    <recommendedName>
        <fullName evidence="1">Pantothenate synthetase</fullName>
        <shortName evidence="1">PS</shortName>
        <ecNumber evidence="1">6.3.2.1</ecNumber>
    </recommendedName>
    <alternativeName>
        <fullName evidence="1">Pantoate--beta-alanine ligase</fullName>
    </alternativeName>
    <alternativeName>
        <fullName evidence="1">Pantoate-activating enzyme</fullName>
    </alternativeName>
</protein>
<accession>A1AW71</accession>
<comment type="function">
    <text evidence="1">Catalyzes the condensation of pantoate with beta-alanine in an ATP-dependent reaction via a pantoyl-adenylate intermediate.</text>
</comment>
<comment type="catalytic activity">
    <reaction evidence="1">
        <text>(R)-pantoate + beta-alanine + ATP = (R)-pantothenate + AMP + diphosphate + H(+)</text>
        <dbReference type="Rhea" id="RHEA:10912"/>
        <dbReference type="ChEBI" id="CHEBI:15378"/>
        <dbReference type="ChEBI" id="CHEBI:15980"/>
        <dbReference type="ChEBI" id="CHEBI:29032"/>
        <dbReference type="ChEBI" id="CHEBI:30616"/>
        <dbReference type="ChEBI" id="CHEBI:33019"/>
        <dbReference type="ChEBI" id="CHEBI:57966"/>
        <dbReference type="ChEBI" id="CHEBI:456215"/>
        <dbReference type="EC" id="6.3.2.1"/>
    </reaction>
</comment>
<comment type="pathway">
    <text evidence="1">Cofactor biosynthesis; (R)-pantothenate biosynthesis; (R)-pantothenate from (R)-pantoate and beta-alanine: step 1/1.</text>
</comment>
<comment type="subunit">
    <text evidence="1">Homodimer.</text>
</comment>
<comment type="subcellular location">
    <subcellularLocation>
        <location evidence="1">Cytoplasm</location>
    </subcellularLocation>
</comment>
<comment type="miscellaneous">
    <text evidence="1">The reaction proceeds by a bi uni uni bi ping pong mechanism.</text>
</comment>
<comment type="similarity">
    <text evidence="1">Belongs to the pantothenate synthetase family.</text>
</comment>
<keyword id="KW-0067">ATP-binding</keyword>
<keyword id="KW-0963">Cytoplasm</keyword>
<keyword id="KW-0436">Ligase</keyword>
<keyword id="KW-0547">Nucleotide-binding</keyword>
<keyword id="KW-0566">Pantothenate biosynthesis</keyword>
<proteinExistence type="inferred from homology"/>
<sequence>MQLCYQNTQITKLVNNWHTQGKTVAFVPTMGGLHQGHLSLIDIAKQKADKVIVSIFVNPAQFSKNEDLDSYPRTINADLTALKVNVDGVFIPNIKQIYPKGISKYIDVGKIGQILCGRTRPHFFNGVAQVVEILFGIVRPDVAVFGQKDYQQLLVIKQMVKNLSLNICIESGEIIREKSGLAMSTRNQYLSKNEAKIATNLHKTLSYFKHEILQNKKVYVLNELAKLDLKQHFKIDYLEVLDANNLKQITDNTHQIVILSAVFLGSVRLIDNIIFKKG</sequence>